<proteinExistence type="inferred from homology"/>
<accession>G8QMC2</accession>
<comment type="function">
    <text evidence="1 3">Part of the MsrPQ system that repairs oxidized periplasmic proteins containing methionine sulfoxide residues (Met-O), using respiratory chain electrons. Thus protects these proteins from oxidative-stress damage caused by reactive species of oxygen and chlorine generated by the host defense mechanisms. MsrPQ is essential for the maintenance of envelope integrity under bleach stress, rescuing a wide series of structurally unrelated periplasmic proteins from methionine oxidation. The catalytic subunit MsrP is non-stereospecific, being able to reduce both (R-) and (S-) diastereoisomers of methionine sulfoxide (By similarity). Involved in protection against reactive chlorine species (RCS) generated by chlorite and hypochlorite (PubMed:25968643).</text>
</comment>
<comment type="catalytic activity">
    <reaction evidence="1">
        <text>L-methionyl-[protein] + a quinone + H2O = L-methionyl-(R)-S-oxide-[protein] + a quinol</text>
        <dbReference type="Rhea" id="RHEA:51296"/>
        <dbReference type="Rhea" id="RHEA-COMP:12313"/>
        <dbReference type="Rhea" id="RHEA-COMP:12314"/>
        <dbReference type="ChEBI" id="CHEBI:15377"/>
        <dbReference type="ChEBI" id="CHEBI:16044"/>
        <dbReference type="ChEBI" id="CHEBI:24646"/>
        <dbReference type="ChEBI" id="CHEBI:45764"/>
        <dbReference type="ChEBI" id="CHEBI:132124"/>
    </reaction>
</comment>
<comment type="cofactor">
    <cofactor evidence="1">
        <name>Mo-molybdopterin</name>
        <dbReference type="ChEBI" id="CHEBI:71302"/>
    </cofactor>
    <text evidence="1">Binds 1 Mo-molybdopterin (Mo-MPT) cofactor per subunit.</text>
</comment>
<comment type="subunit">
    <text evidence="1">Heterodimer of a catalytic subunit (MsrP) and a heme-binding subunit (MsrQ).</text>
</comment>
<comment type="subcellular location">
    <subcellularLocation>
        <location evidence="1">Periplasm</location>
    </subcellularLocation>
    <text evidence="1">Is attached to the inner membrane when interacting with the MsrQ subunit.</text>
</comment>
<comment type="PTM">
    <text evidence="1">Predicted to be exported by the Tat system. The position of the signal peptide cleavage has not been experimentally proven.</text>
</comment>
<comment type="disruption phenotype">
    <text evidence="3">No effect when grown in presence of chlorite, growth of a double sigF-yedY2 mutant is completely inhibited by 20 mM chlorite.</text>
</comment>
<comment type="similarity">
    <text evidence="1">Belongs to the MsrP family.</text>
</comment>
<sequence length="312" mass="35047">MLIRRPPDLLPSEITPEPLARGRRALLKGLGAGAALAGLGLPQISQAGSLGTLRPSPLSSDEKLTPLKSVTGYNNFYEFGTDKEDPARHAPGRLKTRPWTVTVEGEIKRPRTFSIDDLLKLAPLEERIYRMRCVEGWSMVIPWVGFPLAELIRQVEPNGQARFVEFVTLADPQQMPGVRSPLLDWPYVEGLRLDEAQHPLTLLAVGLYGEVLPAQNGAPIRLVVPWKYGFKSAKSIVRIRFVREQPRSTWMKAGPSEYGFYSNVNPAVDHPRWSQATERRIGEFIKRKTLPFNGYADQVAGLYSGMDLRRFF</sequence>
<keyword id="KW-0479">Metal-binding</keyword>
<keyword id="KW-0500">Molybdenum</keyword>
<keyword id="KW-0560">Oxidoreductase</keyword>
<keyword id="KW-0574">Periplasm</keyword>
<keyword id="KW-0732">Signal</keyword>
<organism>
    <name type="scientific">Azospira oryzae (strain ATCC BAA-33 / DSM 13638 / PS)</name>
    <name type="common">Dechlorosoma suillum</name>
    <dbReference type="NCBI Taxonomy" id="640081"/>
    <lineage>
        <taxon>Bacteria</taxon>
        <taxon>Pseudomonadati</taxon>
        <taxon>Pseudomonadota</taxon>
        <taxon>Betaproteobacteria</taxon>
        <taxon>Rhodocyclales</taxon>
        <taxon>Rhodocyclaceae</taxon>
        <taxon>Azospira</taxon>
    </lineage>
</organism>
<name>MSRP_AZOOP</name>
<gene>
    <name evidence="1" type="primary">msrP</name>
    <name evidence="4" type="synonym">yedY2</name>
    <name type="ordered locus">Dsui_1300</name>
</gene>
<reference key="1">
    <citation type="journal article" date="2012" name="J. Bacteriol.">
        <title>Complete genome sequence of the anaerobic perchlorate-reducing bacterium Azospira suillum strain PS.</title>
        <authorList>
            <person name="Byrne-Bailey K.G."/>
            <person name="Coates J.D."/>
        </authorList>
    </citation>
    <scope>NUCLEOTIDE SEQUENCE [LARGE SCALE GENOMIC DNA]</scope>
    <source>
        <strain>ATCC BAA-33 / DSM 13638 / PS</strain>
    </source>
</reference>
<reference key="2">
    <citation type="journal article" date="2015" name="MBio">
        <title>Novel mechanism for scavenging of hypochlorite involving a periplasmic methionine-rich peptide and methionine sulfoxide reductase.</title>
        <authorList>
            <person name="Melnyk R.A."/>
            <person name="Youngblut M.D."/>
            <person name="Clark I.C."/>
            <person name="Carlson H.K."/>
            <person name="Wetmore K.M."/>
            <person name="Price M.N."/>
            <person name="Iavarone A.T."/>
            <person name="Deutschbauer A.M."/>
            <person name="Arkin A.P."/>
            <person name="Coates J.D."/>
        </authorList>
    </citation>
    <scope>FUNCTION</scope>
    <scope>DISRUPTION PHENOTYPE</scope>
    <source>
        <strain>ATCC BAA-33 / DSM 13638 / PS</strain>
    </source>
</reference>
<feature type="signal peptide" description="Tat-type signal" evidence="2">
    <location>
        <begin position="1"/>
        <end position="47"/>
    </location>
</feature>
<feature type="chain" id="PRO_0000440889" description="Protein-methionine-sulfoxide reductase catalytic subunit MsrP" evidence="2">
    <location>
        <begin position="48"/>
        <end position="312"/>
    </location>
</feature>
<feature type="binding site" evidence="1">
    <location>
        <position position="74"/>
    </location>
    <ligand>
        <name>Mo-molybdopterin</name>
        <dbReference type="ChEBI" id="CHEBI:71302"/>
    </ligand>
</feature>
<feature type="binding site" evidence="1">
    <location>
        <begin position="77"/>
        <end position="78"/>
    </location>
    <ligand>
        <name>Mo-molybdopterin</name>
        <dbReference type="ChEBI" id="CHEBI:71302"/>
    </ligand>
</feature>
<feature type="binding site" evidence="1">
    <location>
        <position position="133"/>
    </location>
    <ligand>
        <name>Mo-molybdopterin</name>
        <dbReference type="ChEBI" id="CHEBI:71302"/>
    </ligand>
    <ligandPart>
        <name>Mo</name>
        <dbReference type="ChEBI" id="CHEBI:28685"/>
    </ligandPart>
</feature>
<feature type="binding site" evidence="1">
    <location>
        <position position="168"/>
    </location>
    <ligand>
        <name>Mo-molybdopterin</name>
        <dbReference type="ChEBI" id="CHEBI:71302"/>
    </ligand>
</feature>
<feature type="binding site" evidence="1">
    <location>
        <position position="216"/>
    </location>
    <ligand>
        <name>Mo-molybdopterin</name>
        <dbReference type="ChEBI" id="CHEBI:71302"/>
    </ligand>
</feature>
<feature type="binding site" evidence="1">
    <location>
        <position position="221"/>
    </location>
    <ligand>
        <name>Mo-molybdopterin</name>
        <dbReference type="ChEBI" id="CHEBI:71302"/>
    </ligand>
</feature>
<feature type="binding site" evidence="1">
    <location>
        <begin position="232"/>
        <end position="234"/>
    </location>
    <ligand>
        <name>Mo-molybdopterin</name>
        <dbReference type="ChEBI" id="CHEBI:71302"/>
    </ligand>
</feature>
<dbReference type="EC" id="1.8.5.-" evidence="1"/>
<dbReference type="EMBL" id="CP003153">
    <property type="protein sequence ID" value="AEV25700.1"/>
    <property type="molecule type" value="Genomic_DNA"/>
</dbReference>
<dbReference type="RefSeq" id="WP_014236401.1">
    <property type="nucleotide sequence ID" value="NC_016616.1"/>
</dbReference>
<dbReference type="SMR" id="G8QMC2"/>
<dbReference type="STRING" id="640081.Dsui_1300"/>
<dbReference type="KEGG" id="dsu:Dsui_1300"/>
<dbReference type="eggNOG" id="COG2041">
    <property type="taxonomic scope" value="Bacteria"/>
</dbReference>
<dbReference type="HOGENOM" id="CLU_045520_0_0_4"/>
<dbReference type="OrthoDB" id="9795587at2"/>
<dbReference type="Proteomes" id="UP000005633">
    <property type="component" value="Chromosome"/>
</dbReference>
<dbReference type="GO" id="GO:0042597">
    <property type="term" value="C:periplasmic space"/>
    <property type="evidence" value="ECO:0007669"/>
    <property type="project" value="UniProtKB-SubCell"/>
</dbReference>
<dbReference type="GO" id="GO:0046872">
    <property type="term" value="F:metal ion binding"/>
    <property type="evidence" value="ECO:0007669"/>
    <property type="project" value="UniProtKB-KW"/>
</dbReference>
<dbReference type="GO" id="GO:0043546">
    <property type="term" value="F:molybdopterin cofactor binding"/>
    <property type="evidence" value="ECO:0007669"/>
    <property type="project" value="UniProtKB-UniRule"/>
</dbReference>
<dbReference type="GO" id="GO:0016672">
    <property type="term" value="F:oxidoreductase activity, acting on a sulfur group of donors, quinone or similar compound as acceptor"/>
    <property type="evidence" value="ECO:0007669"/>
    <property type="project" value="UniProtKB-UniRule"/>
</dbReference>
<dbReference type="GO" id="GO:0030091">
    <property type="term" value="P:protein repair"/>
    <property type="evidence" value="ECO:0007669"/>
    <property type="project" value="UniProtKB-UniRule"/>
</dbReference>
<dbReference type="Gene3D" id="3.90.420.10">
    <property type="entry name" value="Oxidoreductase, molybdopterin-binding domain"/>
    <property type="match status" value="1"/>
</dbReference>
<dbReference type="HAMAP" id="MF_01206">
    <property type="entry name" value="MsrP"/>
    <property type="match status" value="1"/>
</dbReference>
<dbReference type="InterPro" id="IPR022867">
    <property type="entry name" value="MsrP"/>
</dbReference>
<dbReference type="InterPro" id="IPR000572">
    <property type="entry name" value="OxRdtase_Mopterin-bd_dom"/>
</dbReference>
<dbReference type="InterPro" id="IPR036374">
    <property type="entry name" value="OxRdtase_Mopterin-bd_sf"/>
</dbReference>
<dbReference type="InterPro" id="IPR006311">
    <property type="entry name" value="TAT_signal"/>
</dbReference>
<dbReference type="InterPro" id="IPR019546">
    <property type="entry name" value="TAT_signal_bac_arc"/>
</dbReference>
<dbReference type="NCBIfam" id="NF003767">
    <property type="entry name" value="PRK05363.1"/>
    <property type="match status" value="1"/>
</dbReference>
<dbReference type="NCBIfam" id="TIGR01409">
    <property type="entry name" value="TAT_signal_seq"/>
    <property type="match status" value="1"/>
</dbReference>
<dbReference type="PANTHER" id="PTHR43032">
    <property type="entry name" value="PROTEIN-METHIONINE-SULFOXIDE REDUCTASE"/>
    <property type="match status" value="1"/>
</dbReference>
<dbReference type="PANTHER" id="PTHR43032:SF3">
    <property type="entry name" value="PROTEIN-METHIONINE-SULFOXIDE REDUCTASE CATALYTIC SUBUNIT MSRP"/>
    <property type="match status" value="1"/>
</dbReference>
<dbReference type="Pfam" id="PF00174">
    <property type="entry name" value="Oxidored_molyb"/>
    <property type="match status" value="1"/>
</dbReference>
<dbReference type="SUPFAM" id="SSF56524">
    <property type="entry name" value="Oxidoreductase molybdopterin-binding domain"/>
    <property type="match status" value="1"/>
</dbReference>
<dbReference type="PROSITE" id="PS51318">
    <property type="entry name" value="TAT"/>
    <property type="match status" value="1"/>
</dbReference>
<evidence type="ECO:0000255" key="1">
    <source>
        <dbReference type="HAMAP-Rule" id="MF_01206"/>
    </source>
</evidence>
<evidence type="ECO:0000255" key="2">
    <source>
        <dbReference type="PROSITE-ProRule" id="PRU00648"/>
    </source>
</evidence>
<evidence type="ECO:0000269" key="3">
    <source>
    </source>
</evidence>
<evidence type="ECO:0000303" key="4">
    <source>
    </source>
</evidence>
<protein>
    <recommendedName>
        <fullName evidence="1">Protein-methionine-sulfoxide reductase catalytic subunit MsrP</fullName>
        <ecNumber evidence="1">1.8.5.-</ecNumber>
    </recommendedName>
</protein>